<dbReference type="EC" id="7.1.1.-" evidence="1"/>
<dbReference type="EMBL" id="AP009123">
    <property type="protein sequence ID" value="BAF41302.1"/>
    <property type="molecule type" value="Genomic_DNA"/>
</dbReference>
<dbReference type="RefSeq" id="YP_913241.1">
    <property type="nucleotide sequence ID" value="NC_008641.1"/>
</dbReference>
<dbReference type="SMR" id="A0ZZ90"/>
<dbReference type="GeneID" id="4575193"/>
<dbReference type="GO" id="GO:0009535">
    <property type="term" value="C:chloroplast thylakoid membrane"/>
    <property type="evidence" value="ECO:0007669"/>
    <property type="project" value="UniProtKB-SubCell"/>
</dbReference>
<dbReference type="GO" id="GO:0003954">
    <property type="term" value="F:NADH dehydrogenase activity"/>
    <property type="evidence" value="ECO:0007669"/>
    <property type="project" value="TreeGrafter"/>
</dbReference>
<dbReference type="GO" id="GO:0016655">
    <property type="term" value="F:oxidoreductase activity, acting on NAD(P)H, quinone or similar compound as acceptor"/>
    <property type="evidence" value="ECO:0007669"/>
    <property type="project" value="UniProtKB-UniRule"/>
</dbReference>
<dbReference type="GO" id="GO:0048038">
    <property type="term" value="F:quinone binding"/>
    <property type="evidence" value="ECO:0007669"/>
    <property type="project" value="UniProtKB-KW"/>
</dbReference>
<dbReference type="GO" id="GO:0009060">
    <property type="term" value="P:aerobic respiration"/>
    <property type="evidence" value="ECO:0007669"/>
    <property type="project" value="TreeGrafter"/>
</dbReference>
<dbReference type="GO" id="GO:0019684">
    <property type="term" value="P:photosynthesis, light reaction"/>
    <property type="evidence" value="ECO:0007669"/>
    <property type="project" value="UniProtKB-UniRule"/>
</dbReference>
<dbReference type="HAMAP" id="MF_01350">
    <property type="entry name" value="NDH1_NuoH"/>
    <property type="match status" value="1"/>
</dbReference>
<dbReference type="InterPro" id="IPR001694">
    <property type="entry name" value="NADH_UbQ_OxRdtase_su1/FPO"/>
</dbReference>
<dbReference type="InterPro" id="IPR018086">
    <property type="entry name" value="NADH_UbQ_OxRdtase_su1_CS"/>
</dbReference>
<dbReference type="NCBIfam" id="NF004741">
    <property type="entry name" value="PRK06076.1-2"/>
    <property type="match status" value="1"/>
</dbReference>
<dbReference type="PANTHER" id="PTHR11432">
    <property type="entry name" value="NADH DEHYDROGENASE SUBUNIT 1"/>
    <property type="match status" value="1"/>
</dbReference>
<dbReference type="PANTHER" id="PTHR11432:SF3">
    <property type="entry name" value="NADH-UBIQUINONE OXIDOREDUCTASE CHAIN 1"/>
    <property type="match status" value="1"/>
</dbReference>
<dbReference type="Pfam" id="PF00146">
    <property type="entry name" value="NADHdh"/>
    <property type="match status" value="1"/>
</dbReference>
<dbReference type="PROSITE" id="PS00667">
    <property type="entry name" value="COMPLEX1_ND1_1"/>
    <property type="match status" value="1"/>
</dbReference>
<dbReference type="PROSITE" id="PS00668">
    <property type="entry name" value="COMPLEX1_ND1_2"/>
    <property type="match status" value="1"/>
</dbReference>
<accession>A0ZZ90</accession>
<geneLocation type="chloroplast"/>
<gene>
    <name evidence="1" type="primary">ndhA</name>
</gene>
<name>NU1C_GOSBA</name>
<evidence type="ECO:0000255" key="1">
    <source>
        <dbReference type="HAMAP-Rule" id="MF_01350"/>
    </source>
</evidence>
<comment type="function">
    <text evidence="1">NDH shuttles electrons from NAD(P)H:plastoquinone, via FMN and iron-sulfur (Fe-S) centers, to quinones in the photosynthetic chain and possibly in a chloroplast respiratory chain. The immediate electron acceptor for the enzyme in this species is believed to be plastoquinone. Couples the redox reaction to proton translocation, and thus conserves the redox energy in a proton gradient.</text>
</comment>
<comment type="catalytic activity">
    <reaction evidence="1">
        <text>a plastoquinone + NADH + (n+1) H(+)(in) = a plastoquinol + NAD(+) + n H(+)(out)</text>
        <dbReference type="Rhea" id="RHEA:42608"/>
        <dbReference type="Rhea" id="RHEA-COMP:9561"/>
        <dbReference type="Rhea" id="RHEA-COMP:9562"/>
        <dbReference type="ChEBI" id="CHEBI:15378"/>
        <dbReference type="ChEBI" id="CHEBI:17757"/>
        <dbReference type="ChEBI" id="CHEBI:57540"/>
        <dbReference type="ChEBI" id="CHEBI:57945"/>
        <dbReference type="ChEBI" id="CHEBI:62192"/>
    </reaction>
</comment>
<comment type="catalytic activity">
    <reaction evidence="1">
        <text>a plastoquinone + NADPH + (n+1) H(+)(in) = a plastoquinol + NADP(+) + n H(+)(out)</text>
        <dbReference type="Rhea" id="RHEA:42612"/>
        <dbReference type="Rhea" id="RHEA-COMP:9561"/>
        <dbReference type="Rhea" id="RHEA-COMP:9562"/>
        <dbReference type="ChEBI" id="CHEBI:15378"/>
        <dbReference type="ChEBI" id="CHEBI:17757"/>
        <dbReference type="ChEBI" id="CHEBI:57783"/>
        <dbReference type="ChEBI" id="CHEBI:58349"/>
        <dbReference type="ChEBI" id="CHEBI:62192"/>
    </reaction>
</comment>
<comment type="subunit">
    <text evidence="1">NDH is composed of at least 16 different subunits, 5 of which are encoded in the nucleus.</text>
</comment>
<comment type="subcellular location">
    <subcellularLocation>
        <location evidence="1">Plastid</location>
        <location evidence="1">Chloroplast thylakoid membrane</location>
        <topology evidence="1">Multi-pass membrane protein</topology>
    </subcellularLocation>
</comment>
<comment type="similarity">
    <text evidence="1">Belongs to the complex I subunit 1 family.</text>
</comment>
<proteinExistence type="inferred from homology"/>
<reference key="1">
    <citation type="journal article" date="2006" name="Genes Genet. Syst.">
        <title>Complete nucleotide sequence of the cotton (Gossypium barbadense L.) chloroplast genome with a comparative analysis of sequences among 9 dicot plants.</title>
        <authorList>
            <person name="Ibrahim R.I.H."/>
            <person name="Azuma J."/>
            <person name="Sakamoto M."/>
        </authorList>
    </citation>
    <scope>NUCLEOTIDE SEQUENCE [LARGE SCALE GENOMIC DNA]</scope>
</reference>
<feature type="chain" id="PRO_0000275581" description="NAD(P)H-quinone oxidoreductase subunit 1, chloroplastic">
    <location>
        <begin position="1"/>
        <end position="363"/>
    </location>
</feature>
<feature type="transmembrane region" description="Helical" evidence="1">
    <location>
        <begin position="30"/>
        <end position="50"/>
    </location>
</feature>
<feature type="transmembrane region" description="Helical" evidence="1">
    <location>
        <begin position="98"/>
        <end position="118"/>
    </location>
</feature>
<feature type="transmembrane region" description="Helical" evidence="1">
    <location>
        <begin position="129"/>
        <end position="149"/>
    </location>
</feature>
<feature type="transmembrane region" description="Helical" evidence="1">
    <location>
        <begin position="248"/>
        <end position="268"/>
    </location>
</feature>
<feature type="transmembrane region" description="Helical" evidence="1">
    <location>
        <begin position="300"/>
        <end position="320"/>
    </location>
</feature>
<feature type="transmembrane region" description="Helical" evidence="1">
    <location>
        <begin position="343"/>
        <end position="363"/>
    </location>
</feature>
<organism>
    <name type="scientific">Gossypium barbadense</name>
    <name type="common">Sea Island cotton</name>
    <name type="synonym">Hibiscus barbadensis</name>
    <dbReference type="NCBI Taxonomy" id="3634"/>
    <lineage>
        <taxon>Eukaryota</taxon>
        <taxon>Viridiplantae</taxon>
        <taxon>Streptophyta</taxon>
        <taxon>Embryophyta</taxon>
        <taxon>Tracheophyta</taxon>
        <taxon>Spermatophyta</taxon>
        <taxon>Magnoliopsida</taxon>
        <taxon>eudicotyledons</taxon>
        <taxon>Gunneridae</taxon>
        <taxon>Pentapetalae</taxon>
        <taxon>rosids</taxon>
        <taxon>malvids</taxon>
        <taxon>Malvales</taxon>
        <taxon>Malvaceae</taxon>
        <taxon>Malvoideae</taxon>
        <taxon>Gossypium</taxon>
    </lineage>
</organism>
<keyword id="KW-0150">Chloroplast</keyword>
<keyword id="KW-0472">Membrane</keyword>
<keyword id="KW-0520">NAD</keyword>
<keyword id="KW-0521">NADP</keyword>
<keyword id="KW-0934">Plastid</keyword>
<keyword id="KW-0618">Plastoquinone</keyword>
<keyword id="KW-0874">Quinone</keyword>
<keyword id="KW-0793">Thylakoid</keyword>
<keyword id="KW-1278">Translocase</keyword>
<keyword id="KW-0812">Transmembrane</keyword>
<keyword id="KW-1133">Transmembrane helix</keyword>
<sequence length="363" mass="40252">MIIYTTEVEDINSFYTLESLKEVYGIIWMLVPILTLVLGITIGVLVIVWLEREISAGIQQRIGPEYAGPLGLLQALADGTKLLFKENILPSRGNTRLFSIGPAIAVISILLSFSVIPFSSRLILADLNIGIFLWIAISSIAPVGLLMSGYGSNNKYSFLGGLRAAAQSISYEIPLTLCVLSISLLSNSSSTIDIVEAQSKYGYWGWNLWRQPIGFIVFLISSLAECERLPFDLPEAEEELVAGYQTEYSGIKFGLFYVASYLNLLLSSLFVTVLYLGGWNISIPYVFAPELFEINKINGIIGTTIGIFITLAKTYLFLFISIATRWTLPRLRMDQLLNLGWKFLLPISLGNLLLTTSFQLLSL</sequence>
<protein>
    <recommendedName>
        <fullName evidence="1">NAD(P)H-quinone oxidoreductase subunit 1, chloroplastic</fullName>
        <ecNumber evidence="1">7.1.1.-</ecNumber>
    </recommendedName>
    <alternativeName>
        <fullName evidence="1">NAD(P)H dehydrogenase subunit 1</fullName>
        <shortName evidence="1">NDH subunit 1</shortName>
    </alternativeName>
    <alternativeName>
        <fullName evidence="1">NADH-plastoquinone oxidoreductase subunit 1</fullName>
    </alternativeName>
</protein>